<reference key="1">
    <citation type="journal article" date="2002" name="Nature">
        <title>The genome sequence of Schizosaccharomyces pombe.</title>
        <authorList>
            <person name="Wood V."/>
            <person name="Gwilliam R."/>
            <person name="Rajandream M.A."/>
            <person name="Lyne M.H."/>
            <person name="Lyne R."/>
            <person name="Stewart A."/>
            <person name="Sgouros J.G."/>
            <person name="Peat N."/>
            <person name="Hayles J."/>
            <person name="Baker S.G."/>
            <person name="Basham D."/>
            <person name="Bowman S."/>
            <person name="Brooks K."/>
            <person name="Brown D."/>
            <person name="Brown S."/>
            <person name="Chillingworth T."/>
            <person name="Churcher C.M."/>
            <person name="Collins M."/>
            <person name="Connor R."/>
            <person name="Cronin A."/>
            <person name="Davis P."/>
            <person name="Feltwell T."/>
            <person name="Fraser A."/>
            <person name="Gentles S."/>
            <person name="Goble A."/>
            <person name="Hamlin N."/>
            <person name="Harris D.E."/>
            <person name="Hidalgo J."/>
            <person name="Hodgson G."/>
            <person name="Holroyd S."/>
            <person name="Hornsby T."/>
            <person name="Howarth S."/>
            <person name="Huckle E.J."/>
            <person name="Hunt S."/>
            <person name="Jagels K."/>
            <person name="James K.D."/>
            <person name="Jones L."/>
            <person name="Jones M."/>
            <person name="Leather S."/>
            <person name="McDonald S."/>
            <person name="McLean J."/>
            <person name="Mooney P."/>
            <person name="Moule S."/>
            <person name="Mungall K.L."/>
            <person name="Murphy L.D."/>
            <person name="Niblett D."/>
            <person name="Odell C."/>
            <person name="Oliver K."/>
            <person name="O'Neil S."/>
            <person name="Pearson D."/>
            <person name="Quail M.A."/>
            <person name="Rabbinowitsch E."/>
            <person name="Rutherford K.M."/>
            <person name="Rutter S."/>
            <person name="Saunders D."/>
            <person name="Seeger K."/>
            <person name="Sharp S."/>
            <person name="Skelton J."/>
            <person name="Simmonds M.N."/>
            <person name="Squares R."/>
            <person name="Squares S."/>
            <person name="Stevens K."/>
            <person name="Taylor K."/>
            <person name="Taylor R.G."/>
            <person name="Tivey A."/>
            <person name="Walsh S.V."/>
            <person name="Warren T."/>
            <person name="Whitehead S."/>
            <person name="Woodward J.R."/>
            <person name="Volckaert G."/>
            <person name="Aert R."/>
            <person name="Robben J."/>
            <person name="Grymonprez B."/>
            <person name="Weltjens I."/>
            <person name="Vanstreels E."/>
            <person name="Rieger M."/>
            <person name="Schaefer M."/>
            <person name="Mueller-Auer S."/>
            <person name="Gabel C."/>
            <person name="Fuchs M."/>
            <person name="Duesterhoeft A."/>
            <person name="Fritzc C."/>
            <person name="Holzer E."/>
            <person name="Moestl D."/>
            <person name="Hilbert H."/>
            <person name="Borzym K."/>
            <person name="Langer I."/>
            <person name="Beck A."/>
            <person name="Lehrach H."/>
            <person name="Reinhardt R."/>
            <person name="Pohl T.M."/>
            <person name="Eger P."/>
            <person name="Zimmermann W."/>
            <person name="Wedler H."/>
            <person name="Wambutt R."/>
            <person name="Purnelle B."/>
            <person name="Goffeau A."/>
            <person name="Cadieu E."/>
            <person name="Dreano S."/>
            <person name="Gloux S."/>
            <person name="Lelaure V."/>
            <person name="Mottier S."/>
            <person name="Galibert F."/>
            <person name="Aves S.J."/>
            <person name="Xiang Z."/>
            <person name="Hunt C."/>
            <person name="Moore K."/>
            <person name="Hurst S.M."/>
            <person name="Lucas M."/>
            <person name="Rochet M."/>
            <person name="Gaillardin C."/>
            <person name="Tallada V.A."/>
            <person name="Garzon A."/>
            <person name="Thode G."/>
            <person name="Daga R.R."/>
            <person name="Cruzado L."/>
            <person name="Jimenez J."/>
            <person name="Sanchez M."/>
            <person name="del Rey F."/>
            <person name="Benito J."/>
            <person name="Dominguez A."/>
            <person name="Revuelta J.L."/>
            <person name="Moreno S."/>
            <person name="Armstrong J."/>
            <person name="Forsburg S.L."/>
            <person name="Cerutti L."/>
            <person name="Lowe T."/>
            <person name="McCombie W.R."/>
            <person name="Paulsen I."/>
            <person name="Potashkin J."/>
            <person name="Shpakovski G.V."/>
            <person name="Ussery D."/>
            <person name="Barrell B.G."/>
            <person name="Nurse P."/>
        </authorList>
    </citation>
    <scope>NUCLEOTIDE SEQUENCE [LARGE SCALE GENOMIC DNA]</scope>
    <source>
        <strain>972 / ATCC 24843</strain>
    </source>
</reference>
<reference key="2">
    <citation type="journal article" date="2006" name="Nat. Biotechnol.">
        <title>ORFeome cloning and global analysis of protein localization in the fission yeast Schizosaccharomyces pombe.</title>
        <authorList>
            <person name="Matsuyama A."/>
            <person name="Arai R."/>
            <person name="Yashiroda Y."/>
            <person name="Shirai A."/>
            <person name="Kamata A."/>
            <person name="Sekido S."/>
            <person name="Kobayashi Y."/>
            <person name="Hashimoto A."/>
            <person name="Hamamoto M."/>
            <person name="Hiraoka Y."/>
            <person name="Horinouchi S."/>
            <person name="Yoshida M."/>
        </authorList>
    </citation>
    <scope>SUBCELLULAR LOCATION [LARGE SCALE ANALYSIS]</scope>
</reference>
<dbReference type="EMBL" id="CU329672">
    <property type="protein sequence ID" value="CAA19105.1"/>
    <property type="molecule type" value="Genomic_DNA"/>
</dbReference>
<dbReference type="PIR" id="T41376">
    <property type="entry name" value="T41376"/>
</dbReference>
<dbReference type="SMR" id="O59799"/>
<dbReference type="BioGRID" id="275444">
    <property type="interactions" value="1"/>
</dbReference>
<dbReference type="FunCoup" id="O59799">
    <property type="interactions" value="19"/>
</dbReference>
<dbReference type="PaxDb" id="4896-SPCC550.01c.1"/>
<dbReference type="EnsemblFungi" id="SPCC550.01c.1">
    <property type="protein sequence ID" value="SPCC550.01c.1:pep"/>
    <property type="gene ID" value="SPCC550.01c"/>
</dbReference>
<dbReference type="KEGG" id="spo:2538864"/>
<dbReference type="PomBase" id="SPCC550.01c"/>
<dbReference type="VEuPathDB" id="FungiDB:SPCC550.01c"/>
<dbReference type="eggNOG" id="KOG4138">
    <property type="taxonomic scope" value="Eukaryota"/>
</dbReference>
<dbReference type="HOGENOM" id="CLU_169171_1_0_1"/>
<dbReference type="InParanoid" id="O59799"/>
<dbReference type="OMA" id="CWKRQGN"/>
<dbReference type="PhylomeDB" id="O59799"/>
<dbReference type="PRO" id="PR:O59799"/>
<dbReference type="Proteomes" id="UP000002485">
    <property type="component" value="Chromosome III"/>
</dbReference>
<dbReference type="GO" id="GO:0005758">
    <property type="term" value="C:mitochondrial intermembrane space"/>
    <property type="evidence" value="ECO:0000318"/>
    <property type="project" value="GO_Central"/>
</dbReference>
<dbReference type="GO" id="GO:0005634">
    <property type="term" value="C:nucleus"/>
    <property type="evidence" value="ECO:0007669"/>
    <property type="project" value="UniProtKB-SubCell"/>
</dbReference>
<dbReference type="GO" id="GO:0033617">
    <property type="term" value="P:mitochondrial cytochrome c oxidase assembly"/>
    <property type="evidence" value="ECO:0000266"/>
    <property type="project" value="PomBase"/>
</dbReference>
<dbReference type="InterPro" id="IPR010625">
    <property type="entry name" value="CHCH"/>
</dbReference>
<dbReference type="InterPro" id="IPR039870">
    <property type="entry name" value="Coa4-like"/>
</dbReference>
<dbReference type="PANTHER" id="PTHR13639">
    <property type="entry name" value="CYTOCHROME C OXIDASE ASSEMBLY FACTOR 4 HOMOLOG, MITOCHONDRIAL"/>
    <property type="match status" value="1"/>
</dbReference>
<dbReference type="PANTHER" id="PTHR13639:SF2">
    <property type="entry name" value="CYTOCHROME C OXIDASE ASSEMBLY FACTOR 4 HOMOLOG, MITOCHONDRIAL"/>
    <property type="match status" value="1"/>
</dbReference>
<dbReference type="Pfam" id="PF06747">
    <property type="entry name" value="CHCH"/>
    <property type="match status" value="1"/>
</dbReference>
<dbReference type="PROSITE" id="PS51808">
    <property type="entry name" value="CHCH"/>
    <property type="match status" value="1"/>
</dbReference>
<sequence>MDSIEKTPDGEEEEKDVWDTALEKGGCVEEHLRLNDCYWDTHDWRKCTEQMEEFRKCWEKRHGPLPSISDKKNKNLS</sequence>
<keyword id="KW-0963">Cytoplasm</keyword>
<keyword id="KW-1015">Disulfide bond</keyword>
<keyword id="KW-0539">Nucleus</keyword>
<keyword id="KW-1185">Reference proteome</keyword>
<evidence type="ECO:0000255" key="1">
    <source>
        <dbReference type="PROSITE-ProRule" id="PRU01150"/>
    </source>
</evidence>
<evidence type="ECO:0000269" key="2">
    <source>
    </source>
</evidence>
<protein>
    <recommendedName>
        <fullName>Coiled-coil-helix-coiled-coil-helix domain-containing protein C550.01c</fullName>
    </recommendedName>
</protein>
<feature type="chain" id="PRO_0000310851" description="Coiled-coil-helix-coiled-coil-helix domain-containing protein C550.01c">
    <location>
        <begin position="1"/>
        <end position="77"/>
    </location>
</feature>
<feature type="domain" description="CHCH" evidence="1">
    <location>
        <begin position="24"/>
        <end position="65"/>
    </location>
</feature>
<feature type="short sequence motif" description="Cx9C motif 1" evidence="1">
    <location>
        <begin position="27"/>
        <end position="37"/>
    </location>
</feature>
<feature type="short sequence motif" description="Cx9C motif 2" evidence="1">
    <location>
        <begin position="47"/>
        <end position="57"/>
    </location>
</feature>
<feature type="disulfide bond" evidence="1">
    <location>
        <begin position="27"/>
        <end position="57"/>
    </location>
</feature>
<feature type="disulfide bond" evidence="1">
    <location>
        <begin position="37"/>
        <end position="47"/>
    </location>
</feature>
<comment type="subcellular location">
    <subcellularLocation>
        <location evidence="2">Cytoplasm</location>
    </subcellularLocation>
    <subcellularLocation>
        <location evidence="2">Nucleus</location>
    </subcellularLocation>
</comment>
<name>YJV1_SCHPO</name>
<proteinExistence type="predicted"/>
<gene>
    <name type="ORF">SPCC550.01c</name>
</gene>
<organism>
    <name type="scientific">Schizosaccharomyces pombe (strain 972 / ATCC 24843)</name>
    <name type="common">Fission yeast</name>
    <dbReference type="NCBI Taxonomy" id="284812"/>
    <lineage>
        <taxon>Eukaryota</taxon>
        <taxon>Fungi</taxon>
        <taxon>Dikarya</taxon>
        <taxon>Ascomycota</taxon>
        <taxon>Taphrinomycotina</taxon>
        <taxon>Schizosaccharomycetes</taxon>
        <taxon>Schizosaccharomycetales</taxon>
        <taxon>Schizosaccharomycetaceae</taxon>
        <taxon>Schizosaccharomyces</taxon>
    </lineage>
</organism>
<accession>O59799</accession>